<dbReference type="EC" id="2.7.1.-" evidence="1"/>
<dbReference type="EMBL" id="AM933173">
    <property type="protein sequence ID" value="CAR38011.1"/>
    <property type="molecule type" value="Genomic_DNA"/>
</dbReference>
<dbReference type="RefSeq" id="WP_001273396.1">
    <property type="nucleotide sequence ID" value="NC_011274.1"/>
</dbReference>
<dbReference type="SMR" id="B5RBY0"/>
<dbReference type="KEGG" id="seg:SG2173"/>
<dbReference type="HOGENOM" id="CLU_045532_1_1_6"/>
<dbReference type="Proteomes" id="UP000008321">
    <property type="component" value="Chromosome"/>
</dbReference>
<dbReference type="GO" id="GO:0005737">
    <property type="term" value="C:cytoplasm"/>
    <property type="evidence" value="ECO:0007669"/>
    <property type="project" value="UniProtKB-SubCell"/>
</dbReference>
<dbReference type="GO" id="GO:0005886">
    <property type="term" value="C:plasma membrane"/>
    <property type="evidence" value="ECO:0007669"/>
    <property type="project" value="TreeGrafter"/>
</dbReference>
<dbReference type="GO" id="GO:0005524">
    <property type="term" value="F:ATP binding"/>
    <property type="evidence" value="ECO:0007669"/>
    <property type="project" value="UniProtKB-UniRule"/>
</dbReference>
<dbReference type="GO" id="GO:0001727">
    <property type="term" value="F:lipid kinase activity"/>
    <property type="evidence" value="ECO:0007669"/>
    <property type="project" value="UniProtKB-UniRule"/>
</dbReference>
<dbReference type="GO" id="GO:0000287">
    <property type="term" value="F:magnesium ion binding"/>
    <property type="evidence" value="ECO:0007669"/>
    <property type="project" value="UniProtKB-UniRule"/>
</dbReference>
<dbReference type="GO" id="GO:0008654">
    <property type="term" value="P:phospholipid biosynthetic process"/>
    <property type="evidence" value="ECO:0007669"/>
    <property type="project" value="UniProtKB-UniRule"/>
</dbReference>
<dbReference type="FunFam" id="3.40.50.10330:FF:000008">
    <property type="entry name" value="Probable lipid kinase YegS"/>
    <property type="match status" value="1"/>
</dbReference>
<dbReference type="Gene3D" id="2.60.200.40">
    <property type="match status" value="1"/>
</dbReference>
<dbReference type="Gene3D" id="3.40.50.10330">
    <property type="entry name" value="Probable inorganic polyphosphate/atp-NAD kinase, domain 1"/>
    <property type="match status" value="1"/>
</dbReference>
<dbReference type="HAMAP" id="MF_01377">
    <property type="entry name" value="YegS"/>
    <property type="match status" value="1"/>
</dbReference>
<dbReference type="InterPro" id="IPR017438">
    <property type="entry name" value="ATP-NAD_kinase_N"/>
</dbReference>
<dbReference type="InterPro" id="IPR005218">
    <property type="entry name" value="Diacylglycerol/lipid_kinase"/>
</dbReference>
<dbReference type="InterPro" id="IPR001206">
    <property type="entry name" value="Diacylglycerol_kinase_cat_dom"/>
</dbReference>
<dbReference type="InterPro" id="IPR022433">
    <property type="entry name" value="Lip_kinase_YegS"/>
</dbReference>
<dbReference type="InterPro" id="IPR050187">
    <property type="entry name" value="Lipid_Phosphate_FormReg"/>
</dbReference>
<dbReference type="InterPro" id="IPR016064">
    <property type="entry name" value="NAD/diacylglycerol_kinase_sf"/>
</dbReference>
<dbReference type="InterPro" id="IPR045540">
    <property type="entry name" value="YegS/DAGK_C"/>
</dbReference>
<dbReference type="NCBIfam" id="TIGR03702">
    <property type="entry name" value="lip_kinase_YegS"/>
    <property type="match status" value="1"/>
</dbReference>
<dbReference type="NCBIfam" id="NF009602">
    <property type="entry name" value="PRK13054.1"/>
    <property type="match status" value="1"/>
</dbReference>
<dbReference type="NCBIfam" id="TIGR00147">
    <property type="entry name" value="YegS/Rv2252/BmrU family lipid kinase"/>
    <property type="match status" value="1"/>
</dbReference>
<dbReference type="PANTHER" id="PTHR12358:SF106">
    <property type="entry name" value="LIPID KINASE YEGS"/>
    <property type="match status" value="1"/>
</dbReference>
<dbReference type="PANTHER" id="PTHR12358">
    <property type="entry name" value="SPHINGOSINE KINASE"/>
    <property type="match status" value="1"/>
</dbReference>
<dbReference type="Pfam" id="PF00781">
    <property type="entry name" value="DAGK_cat"/>
    <property type="match status" value="1"/>
</dbReference>
<dbReference type="Pfam" id="PF19279">
    <property type="entry name" value="YegS_C"/>
    <property type="match status" value="1"/>
</dbReference>
<dbReference type="SMART" id="SM00046">
    <property type="entry name" value="DAGKc"/>
    <property type="match status" value="1"/>
</dbReference>
<dbReference type="SUPFAM" id="SSF111331">
    <property type="entry name" value="NAD kinase/diacylglycerol kinase-like"/>
    <property type="match status" value="1"/>
</dbReference>
<dbReference type="PROSITE" id="PS50146">
    <property type="entry name" value="DAGK"/>
    <property type="match status" value="1"/>
</dbReference>
<feature type="chain" id="PRO_1000144874" description="Probable lipid kinase YegS">
    <location>
        <begin position="1"/>
        <end position="299"/>
    </location>
</feature>
<feature type="domain" description="DAGKc" evidence="1">
    <location>
        <begin position="2"/>
        <end position="133"/>
    </location>
</feature>
<feature type="active site" description="Proton acceptor" evidence="1">
    <location>
        <position position="271"/>
    </location>
</feature>
<feature type="binding site" evidence="1">
    <location>
        <position position="40"/>
    </location>
    <ligand>
        <name>ATP</name>
        <dbReference type="ChEBI" id="CHEBI:30616"/>
    </ligand>
</feature>
<feature type="binding site" evidence="1">
    <location>
        <begin position="66"/>
        <end position="72"/>
    </location>
    <ligand>
        <name>ATP</name>
        <dbReference type="ChEBI" id="CHEBI:30616"/>
    </ligand>
</feature>
<feature type="binding site" evidence="1">
    <location>
        <position position="95"/>
    </location>
    <ligand>
        <name>ATP</name>
        <dbReference type="ChEBI" id="CHEBI:30616"/>
    </ligand>
</feature>
<feature type="binding site" evidence="1">
    <location>
        <position position="215"/>
    </location>
    <ligand>
        <name>Mg(2+)</name>
        <dbReference type="ChEBI" id="CHEBI:18420"/>
    </ligand>
</feature>
<feature type="binding site" evidence="1">
    <location>
        <position position="218"/>
    </location>
    <ligand>
        <name>Mg(2+)</name>
        <dbReference type="ChEBI" id="CHEBI:18420"/>
    </ligand>
</feature>
<feature type="binding site" evidence="1">
    <location>
        <position position="220"/>
    </location>
    <ligand>
        <name>Mg(2+)</name>
        <dbReference type="ChEBI" id="CHEBI:18420"/>
    </ligand>
</feature>
<keyword id="KW-0067">ATP-binding</keyword>
<keyword id="KW-0963">Cytoplasm</keyword>
<keyword id="KW-0418">Kinase</keyword>
<keyword id="KW-0444">Lipid biosynthesis</keyword>
<keyword id="KW-0443">Lipid metabolism</keyword>
<keyword id="KW-0460">Magnesium</keyword>
<keyword id="KW-0479">Metal-binding</keyword>
<keyword id="KW-0547">Nucleotide-binding</keyword>
<keyword id="KW-0594">Phospholipid biosynthesis</keyword>
<keyword id="KW-1208">Phospholipid metabolism</keyword>
<keyword id="KW-0808">Transferase</keyword>
<proteinExistence type="inferred from homology"/>
<gene>
    <name evidence="1" type="primary">yegS</name>
    <name type="ordered locus">SG2173</name>
</gene>
<sequence>MANFPASLLILNGKSADNQPLREAITLLRDEGIQIHVRVTWEKGDAQRYVDEARRLGVETVIAGGGDGTINEVSTALIQIRDGVAPALGLLPLGTANDFATSAGIPEALDKALKLAIAGNAMEIDMARVNDKTCFINMATGGFGTRITTETPEKLKAALGGVSYLIHGLMRMDTLTPDRCEIRGENFHWQGDTLVIGIGNGRQAGGGQQLCPTALVNDGLLQLRIFTGEELLPALFSTLTQSDDNPNIIDDASAWFDIHAPHEITFNLDGEPLSGQEFHIEVLPGALRCRLPPDCPLLR</sequence>
<name>YEGS_SALG2</name>
<reference key="1">
    <citation type="journal article" date="2008" name="Genome Res.">
        <title>Comparative genome analysis of Salmonella enteritidis PT4 and Salmonella gallinarum 287/91 provides insights into evolutionary and host adaptation pathways.</title>
        <authorList>
            <person name="Thomson N.R."/>
            <person name="Clayton D.J."/>
            <person name="Windhorst D."/>
            <person name="Vernikos G."/>
            <person name="Davidson S."/>
            <person name="Churcher C."/>
            <person name="Quail M.A."/>
            <person name="Stevens M."/>
            <person name="Jones M.A."/>
            <person name="Watson M."/>
            <person name="Barron A."/>
            <person name="Layton A."/>
            <person name="Pickard D."/>
            <person name="Kingsley R.A."/>
            <person name="Bignell A."/>
            <person name="Clark L."/>
            <person name="Harris B."/>
            <person name="Ormond D."/>
            <person name="Abdellah Z."/>
            <person name="Brooks K."/>
            <person name="Cherevach I."/>
            <person name="Chillingworth T."/>
            <person name="Woodward J."/>
            <person name="Norberczak H."/>
            <person name="Lord A."/>
            <person name="Arrowsmith C."/>
            <person name="Jagels K."/>
            <person name="Moule S."/>
            <person name="Mungall K."/>
            <person name="Saunders M."/>
            <person name="Whitehead S."/>
            <person name="Chabalgoity J.A."/>
            <person name="Maskell D."/>
            <person name="Humphreys T."/>
            <person name="Roberts M."/>
            <person name="Barrow P.A."/>
            <person name="Dougan G."/>
            <person name="Parkhill J."/>
        </authorList>
    </citation>
    <scope>NUCLEOTIDE SEQUENCE [LARGE SCALE GENOMIC DNA]</scope>
    <source>
        <strain>287/91 / NCTC 13346</strain>
    </source>
</reference>
<accession>B5RBY0</accession>
<comment type="function">
    <text evidence="1">Probably phosphorylates lipids; the in vivo substrate is unknown.</text>
</comment>
<comment type="cofactor">
    <cofactor evidence="1">
        <name>Mg(2+)</name>
        <dbReference type="ChEBI" id="CHEBI:18420"/>
    </cofactor>
    <cofactor evidence="1">
        <name>Ca(2+)</name>
        <dbReference type="ChEBI" id="CHEBI:29108"/>
    </cofactor>
    <text evidence="1">Binds 1 Mg(2+) ion per subunit. Ca(2+) may be able to substitute.</text>
</comment>
<comment type="subcellular location">
    <subcellularLocation>
        <location evidence="1">Cytoplasm</location>
    </subcellularLocation>
</comment>
<comment type="similarity">
    <text evidence="1">Belongs to the diacylglycerol/lipid kinase family. YegS lipid kinase subfamily.</text>
</comment>
<protein>
    <recommendedName>
        <fullName evidence="1">Probable lipid kinase YegS</fullName>
        <ecNumber evidence="1">2.7.1.-</ecNumber>
    </recommendedName>
</protein>
<evidence type="ECO:0000255" key="1">
    <source>
        <dbReference type="HAMAP-Rule" id="MF_01377"/>
    </source>
</evidence>
<organism>
    <name type="scientific">Salmonella gallinarum (strain 287/91 / NCTC 13346)</name>
    <dbReference type="NCBI Taxonomy" id="550538"/>
    <lineage>
        <taxon>Bacteria</taxon>
        <taxon>Pseudomonadati</taxon>
        <taxon>Pseudomonadota</taxon>
        <taxon>Gammaproteobacteria</taxon>
        <taxon>Enterobacterales</taxon>
        <taxon>Enterobacteriaceae</taxon>
        <taxon>Salmonella</taxon>
    </lineage>
</organism>